<organism>
    <name type="scientific">Ricinus communis</name>
    <name type="common">Castor bean</name>
    <dbReference type="NCBI Taxonomy" id="3988"/>
    <lineage>
        <taxon>Eukaryota</taxon>
        <taxon>Viridiplantae</taxon>
        <taxon>Streptophyta</taxon>
        <taxon>Embryophyta</taxon>
        <taxon>Tracheophyta</taxon>
        <taxon>Spermatophyta</taxon>
        <taxon>Magnoliopsida</taxon>
        <taxon>eudicotyledons</taxon>
        <taxon>Gunneridae</taxon>
        <taxon>Pentapetalae</taxon>
        <taxon>rosids</taxon>
        <taxon>fabids</taxon>
        <taxon>Malpighiales</taxon>
        <taxon>Euphorbiaceae</taxon>
        <taxon>Acalyphoideae</taxon>
        <taxon>Acalypheae</taxon>
        <taxon>Ricinus</taxon>
    </lineage>
</organism>
<keyword id="KW-0328">Glycosyltransferase</keyword>
<keyword id="KW-0472">Membrane</keyword>
<keyword id="KW-1185">Reference proteome</keyword>
<keyword id="KW-0808">Transferase</keyword>
<keyword id="KW-0812">Transmembrane</keyword>
<keyword id="KW-1133">Transmembrane helix</keyword>
<accession>B9S2H4</accession>
<dbReference type="EC" id="2.4.1.-" evidence="2"/>
<dbReference type="EMBL" id="EQ973849">
    <property type="protein sequence ID" value="EEF42248.1"/>
    <property type="molecule type" value="Genomic_DNA"/>
</dbReference>
<dbReference type="SMR" id="B9S2H4"/>
<dbReference type="FunCoup" id="B9S2H4">
    <property type="interactions" value="895"/>
</dbReference>
<dbReference type="STRING" id="3988.B9S2H4"/>
<dbReference type="KEGG" id="rcu:8270359"/>
<dbReference type="eggNOG" id="ENOG502QVEP">
    <property type="taxonomic scope" value="Eukaryota"/>
</dbReference>
<dbReference type="InParanoid" id="B9S2H4"/>
<dbReference type="OMA" id="NWRLQFC"/>
<dbReference type="OrthoDB" id="2526284at2759"/>
<dbReference type="Proteomes" id="UP000008311">
    <property type="component" value="Unassembled WGS sequence"/>
</dbReference>
<dbReference type="GO" id="GO:0005737">
    <property type="term" value="C:cytoplasm"/>
    <property type="evidence" value="ECO:0000318"/>
    <property type="project" value="GO_Central"/>
</dbReference>
<dbReference type="GO" id="GO:0016020">
    <property type="term" value="C:membrane"/>
    <property type="evidence" value="ECO:0007669"/>
    <property type="project" value="UniProtKB-SubCell"/>
</dbReference>
<dbReference type="GO" id="GO:0016757">
    <property type="term" value="F:glycosyltransferase activity"/>
    <property type="evidence" value="ECO:0000318"/>
    <property type="project" value="GO_Central"/>
</dbReference>
<dbReference type="GO" id="GO:0070085">
    <property type="term" value="P:glycosylation"/>
    <property type="evidence" value="ECO:0000318"/>
    <property type="project" value="GO_Central"/>
</dbReference>
<dbReference type="InterPro" id="IPR008166">
    <property type="entry name" value="Glyco_transf_92"/>
</dbReference>
<dbReference type="PANTHER" id="PTHR21461">
    <property type="entry name" value="GLYCOSYLTRANSFERASE FAMILY 92 PROTEIN"/>
    <property type="match status" value="1"/>
</dbReference>
<dbReference type="PANTHER" id="PTHR21461:SF16">
    <property type="entry name" value="GLYCOSYLTRANSFERASE FAMILY 92 PROTEIN RCOM_0530710"/>
    <property type="match status" value="1"/>
</dbReference>
<dbReference type="Pfam" id="PF01697">
    <property type="entry name" value="Glyco_transf_92"/>
    <property type="match status" value="1"/>
</dbReference>
<comment type="subcellular location">
    <subcellularLocation>
        <location evidence="2">Membrane</location>
        <topology evidence="2">Single-pass membrane protein</topology>
    </subcellularLocation>
</comment>
<comment type="similarity">
    <text evidence="2">Belongs to the glycosyltransferase 92 family.</text>
</comment>
<sequence>MESEQRRKRKRIYKPDSTSNSFFSVRSLTACLSFFVFLLFISSDRSPIKTVSFRPVLNVPVSLLPTPLGLTRDSFDTKSLPLIVEDRVLLPDHVLLIVSNKVATSQNLDCVYSNLYNSHDVVLKPALSVNQYHRDKSIVRCQLPPNNYSAAVYLRWSWEAAEGVAAAAPASVVSWDRVVYEAMLDWNTVAVFVKGLNLRPHKESDSSKFRCHFGLSKFDKDEGIVFTTEAITAAQEVIRCLLPRSIRNNPVKAQGIRVTVSRINAGEDGVDAPLPSVAKVYGAKSYEKRSNRGKYELCACTMLWNQASFLHEWITYHAWLGVQRWFIYDNNSDDGIQEVVDELNLQNYNVTRHSWPWIKAQEAGFSHCALRARSECKWLGFFDVDEFFYLPRHRGQDMLGENSLRTLVANYSDSSTYAEIRTICHSFGPSGLTSAPSQGVTVGYTCRLQAPERHKSIVRPELLDTTLLNVVHHFKLKEGYRYLNVPESTAVVNHYKYQVWDTFKAKFFRRVSTYVANWQEDQNQGSKDRAPGLGTVAIEPPDWRLRFCEVWDTGLKDFVLANFADTASGYLPWERSPF</sequence>
<name>Y232_RICCO</name>
<proteinExistence type="inferred from homology"/>
<reference key="1">
    <citation type="journal article" date="2010" name="Nat. Biotechnol.">
        <title>Draft genome sequence of the oilseed species Ricinus communis.</title>
        <authorList>
            <person name="Chan A.P."/>
            <person name="Crabtree J."/>
            <person name="Zhao Q."/>
            <person name="Lorenzi H."/>
            <person name="Orvis J."/>
            <person name="Puiu D."/>
            <person name="Melake-Berhan A."/>
            <person name="Jones K.M."/>
            <person name="Redman J."/>
            <person name="Chen G."/>
            <person name="Cahoon E.B."/>
            <person name="Gedil M."/>
            <person name="Stanke M."/>
            <person name="Haas B.J."/>
            <person name="Wortman J.R."/>
            <person name="Fraser-Liggett C.M."/>
            <person name="Ravel J."/>
            <person name="Rabinowicz P.D."/>
        </authorList>
    </citation>
    <scope>NUCLEOTIDE SEQUENCE [LARGE SCALE GENOMIC DNA]</scope>
    <source>
        <strain>cv. Hale</strain>
    </source>
</reference>
<gene>
    <name type="ORF">RCOM_0699480</name>
</gene>
<feature type="chain" id="PRO_0000405582" description="Glycosyltransferase family 92 protein RCOM_0530710">
    <location>
        <begin position="1"/>
        <end position="578"/>
    </location>
</feature>
<feature type="transmembrane region" description="Helical" evidence="1">
    <location>
        <begin position="21"/>
        <end position="43"/>
    </location>
</feature>
<feature type="domain" description="GT92">
    <location>
        <begin position="295"/>
        <end position="531"/>
    </location>
</feature>
<evidence type="ECO:0000255" key="1"/>
<evidence type="ECO:0000305" key="2"/>
<protein>
    <recommendedName>
        <fullName>Glycosyltransferase family 92 protein RCOM_0530710</fullName>
        <ecNumber evidence="2">2.4.1.-</ecNumber>
    </recommendedName>
</protein>